<feature type="transit peptide" description="Mitochondrion" evidence="1">
    <location>
        <begin position="1"/>
        <end position="46"/>
    </location>
</feature>
<feature type="chain" id="PRO_0000327452" description="Elongation factor Ts, mitochondrial">
    <location>
        <begin position="47"/>
        <end position="355"/>
    </location>
</feature>
<reference key="1">
    <citation type="journal article" date="2005" name="Nature">
        <title>The genome of the social amoeba Dictyostelium discoideum.</title>
        <authorList>
            <person name="Eichinger L."/>
            <person name="Pachebat J.A."/>
            <person name="Gloeckner G."/>
            <person name="Rajandream M.A."/>
            <person name="Sucgang R."/>
            <person name="Berriman M."/>
            <person name="Song J."/>
            <person name="Olsen R."/>
            <person name="Szafranski K."/>
            <person name="Xu Q."/>
            <person name="Tunggal B."/>
            <person name="Kummerfeld S."/>
            <person name="Madera M."/>
            <person name="Konfortov B.A."/>
            <person name="Rivero F."/>
            <person name="Bankier A.T."/>
            <person name="Lehmann R."/>
            <person name="Hamlin N."/>
            <person name="Davies R."/>
            <person name="Gaudet P."/>
            <person name="Fey P."/>
            <person name="Pilcher K."/>
            <person name="Chen G."/>
            <person name="Saunders D."/>
            <person name="Sodergren E.J."/>
            <person name="Davis P."/>
            <person name="Kerhornou A."/>
            <person name="Nie X."/>
            <person name="Hall N."/>
            <person name="Anjard C."/>
            <person name="Hemphill L."/>
            <person name="Bason N."/>
            <person name="Farbrother P."/>
            <person name="Desany B."/>
            <person name="Just E."/>
            <person name="Morio T."/>
            <person name="Rost R."/>
            <person name="Churcher C.M."/>
            <person name="Cooper J."/>
            <person name="Haydock S."/>
            <person name="van Driessche N."/>
            <person name="Cronin A."/>
            <person name="Goodhead I."/>
            <person name="Muzny D.M."/>
            <person name="Mourier T."/>
            <person name="Pain A."/>
            <person name="Lu M."/>
            <person name="Harper D."/>
            <person name="Lindsay R."/>
            <person name="Hauser H."/>
            <person name="James K.D."/>
            <person name="Quiles M."/>
            <person name="Madan Babu M."/>
            <person name="Saito T."/>
            <person name="Buchrieser C."/>
            <person name="Wardroper A."/>
            <person name="Felder M."/>
            <person name="Thangavelu M."/>
            <person name="Johnson D."/>
            <person name="Knights A."/>
            <person name="Loulseged H."/>
            <person name="Mungall K.L."/>
            <person name="Oliver K."/>
            <person name="Price C."/>
            <person name="Quail M.A."/>
            <person name="Urushihara H."/>
            <person name="Hernandez J."/>
            <person name="Rabbinowitsch E."/>
            <person name="Steffen D."/>
            <person name="Sanders M."/>
            <person name="Ma J."/>
            <person name="Kohara Y."/>
            <person name="Sharp S."/>
            <person name="Simmonds M.N."/>
            <person name="Spiegler S."/>
            <person name="Tivey A."/>
            <person name="Sugano S."/>
            <person name="White B."/>
            <person name="Walker D."/>
            <person name="Woodward J.R."/>
            <person name="Winckler T."/>
            <person name="Tanaka Y."/>
            <person name="Shaulsky G."/>
            <person name="Schleicher M."/>
            <person name="Weinstock G.M."/>
            <person name="Rosenthal A."/>
            <person name="Cox E.C."/>
            <person name="Chisholm R.L."/>
            <person name="Gibbs R.A."/>
            <person name="Loomis W.F."/>
            <person name="Platzer M."/>
            <person name="Kay R.R."/>
            <person name="Williams J.G."/>
            <person name="Dear P.H."/>
            <person name="Noegel A.A."/>
            <person name="Barrell B.G."/>
            <person name="Kuspa A."/>
        </authorList>
    </citation>
    <scope>NUCLEOTIDE SEQUENCE [LARGE SCALE GENOMIC DNA]</scope>
    <source>
        <strain>AX4</strain>
    </source>
</reference>
<name>EFTS_DICDI</name>
<keyword id="KW-0251">Elongation factor</keyword>
<keyword id="KW-0496">Mitochondrion</keyword>
<keyword id="KW-0648">Protein biosynthesis</keyword>
<keyword id="KW-1185">Reference proteome</keyword>
<keyword id="KW-0809">Transit peptide</keyword>
<comment type="function">
    <text evidence="1">Associates with the EF-Tu.GDP complex and induces the exchange of GDP to GTP. It remains bound to the aminoacyl-tRNA.EF-Tu.GTP complex up to the GTP hydrolysis stage on the ribosome.</text>
</comment>
<comment type="subcellular location">
    <subcellularLocation>
        <location evidence="1">Mitochondrion</location>
    </subcellularLocation>
</comment>
<comment type="similarity">
    <text evidence="1">Belongs to the EF-Ts family.</text>
</comment>
<protein>
    <recommendedName>
        <fullName evidence="1">Elongation factor Ts, mitochondrial</fullName>
        <shortName evidence="1">EF-Ts</shortName>
        <shortName evidence="1">EF-TsMt</shortName>
    </recommendedName>
</protein>
<evidence type="ECO:0000255" key="1">
    <source>
        <dbReference type="HAMAP-Rule" id="MF_03135"/>
    </source>
</evidence>
<accession>Q54LV3</accession>
<gene>
    <name type="primary">tsfm</name>
    <name type="ORF">DDB_G0286399</name>
</gene>
<dbReference type="EMBL" id="AAFI02000085">
    <property type="protein sequence ID" value="EAL64224.1"/>
    <property type="molecule type" value="Genomic_DNA"/>
</dbReference>
<dbReference type="RefSeq" id="XP_637727.1">
    <property type="nucleotide sequence ID" value="XM_632635.1"/>
</dbReference>
<dbReference type="SMR" id="Q54LV3"/>
<dbReference type="FunCoup" id="Q54LV3">
    <property type="interactions" value="704"/>
</dbReference>
<dbReference type="STRING" id="44689.Q54LV3"/>
<dbReference type="PaxDb" id="44689-DDB0266366"/>
<dbReference type="EnsemblProtists" id="EAL64224">
    <property type="protein sequence ID" value="EAL64224"/>
    <property type="gene ID" value="DDB_G0286399"/>
</dbReference>
<dbReference type="GeneID" id="8625592"/>
<dbReference type="KEGG" id="ddi:DDB_G0286399"/>
<dbReference type="dictyBase" id="DDB_G0286399">
    <property type="gene designation" value="tsfm"/>
</dbReference>
<dbReference type="VEuPathDB" id="AmoebaDB:DDB_G0286399"/>
<dbReference type="eggNOG" id="KOG1071">
    <property type="taxonomic scope" value="Eukaryota"/>
</dbReference>
<dbReference type="HOGENOM" id="CLU_047155_4_1_1"/>
<dbReference type="InParanoid" id="Q54LV3"/>
<dbReference type="OMA" id="QEYMLDD"/>
<dbReference type="PhylomeDB" id="Q54LV3"/>
<dbReference type="PRO" id="PR:Q54LV3"/>
<dbReference type="Proteomes" id="UP000002195">
    <property type="component" value="Chromosome 4"/>
</dbReference>
<dbReference type="GO" id="GO:0005739">
    <property type="term" value="C:mitochondrion"/>
    <property type="evidence" value="ECO:0007669"/>
    <property type="project" value="UniProtKB-SubCell"/>
</dbReference>
<dbReference type="GO" id="GO:0003746">
    <property type="term" value="F:translation elongation factor activity"/>
    <property type="evidence" value="ECO:0000318"/>
    <property type="project" value="GO_Central"/>
</dbReference>
<dbReference type="GO" id="GO:0070125">
    <property type="term" value="P:mitochondrial translational elongation"/>
    <property type="evidence" value="ECO:0000318"/>
    <property type="project" value="GO_Central"/>
</dbReference>
<dbReference type="CDD" id="cd14275">
    <property type="entry name" value="UBA_EF-Ts"/>
    <property type="match status" value="1"/>
</dbReference>
<dbReference type="FunFam" id="1.10.8.10:FF:000001">
    <property type="entry name" value="Elongation factor Ts"/>
    <property type="match status" value="1"/>
</dbReference>
<dbReference type="FunFam" id="3.30.479.20:FF:000040">
    <property type="entry name" value="Elongation factor Ts, mitochondrial"/>
    <property type="match status" value="1"/>
</dbReference>
<dbReference type="Gene3D" id="1.10.8.10">
    <property type="entry name" value="DNA helicase RuvA subunit, C-terminal domain"/>
    <property type="match status" value="1"/>
</dbReference>
<dbReference type="Gene3D" id="3.30.479.20">
    <property type="entry name" value="Elongation factor Ts, dimerisation domain"/>
    <property type="match status" value="2"/>
</dbReference>
<dbReference type="HAMAP" id="MF_00050">
    <property type="entry name" value="EF_Ts"/>
    <property type="match status" value="1"/>
</dbReference>
<dbReference type="InterPro" id="IPR036402">
    <property type="entry name" value="EF-Ts_dimer_sf"/>
</dbReference>
<dbReference type="InterPro" id="IPR001816">
    <property type="entry name" value="Transl_elong_EFTs/EF1B"/>
</dbReference>
<dbReference type="InterPro" id="IPR014039">
    <property type="entry name" value="Transl_elong_EFTs/EF1B_dimer"/>
</dbReference>
<dbReference type="InterPro" id="IPR018101">
    <property type="entry name" value="Transl_elong_Ts_CS"/>
</dbReference>
<dbReference type="InterPro" id="IPR009060">
    <property type="entry name" value="UBA-like_sf"/>
</dbReference>
<dbReference type="NCBIfam" id="TIGR00116">
    <property type="entry name" value="tsf"/>
    <property type="match status" value="1"/>
</dbReference>
<dbReference type="PANTHER" id="PTHR11741">
    <property type="entry name" value="ELONGATION FACTOR TS"/>
    <property type="match status" value="1"/>
</dbReference>
<dbReference type="PANTHER" id="PTHR11741:SF0">
    <property type="entry name" value="ELONGATION FACTOR TS, MITOCHONDRIAL"/>
    <property type="match status" value="1"/>
</dbReference>
<dbReference type="Pfam" id="PF25025">
    <property type="entry name" value="EF-Ts_N"/>
    <property type="match status" value="1"/>
</dbReference>
<dbReference type="Pfam" id="PF00889">
    <property type="entry name" value="EF_TS"/>
    <property type="match status" value="1"/>
</dbReference>
<dbReference type="SUPFAM" id="SSF54713">
    <property type="entry name" value="Elongation factor Ts (EF-Ts), dimerisation domain"/>
    <property type="match status" value="1"/>
</dbReference>
<dbReference type="SUPFAM" id="SSF46934">
    <property type="entry name" value="UBA-like"/>
    <property type="match status" value="1"/>
</dbReference>
<dbReference type="PROSITE" id="PS01127">
    <property type="entry name" value="EF_TS_2"/>
    <property type="match status" value="1"/>
</dbReference>
<sequence length="355" mass="39587">MIRSLNFALRNCNKNILINSNKITINNGLLLKKNNFCTQSTSEVKVPTELVVQLRKKTQSPVQECKKALQASNNDMDGAIKWLLEKGKATAEKLKSRVSAEGIISVLVDSGSGKAVILEMNSETDFVSRGDIFRNLARDISKATLSNPISGGKLAENGILELDPTQVENIYPIKINITNEDGVAEEMTIKDSIVRIVSKLRENIVIRRASFIQPLNNNNNNSKSYISSYAHDSTSEKKDVGRLGSIVQFEYQGDCNNMNSLKEFANQLAIHIVSNSPSVVTVNDIPSSVLEECKNNNKNPESLYDDMVLYEQSYMYSPDHSVKQYLEILSEKLGIKNLSVKTFRRYAIGETAERV</sequence>
<proteinExistence type="inferred from homology"/>
<organism>
    <name type="scientific">Dictyostelium discoideum</name>
    <name type="common">Social amoeba</name>
    <dbReference type="NCBI Taxonomy" id="44689"/>
    <lineage>
        <taxon>Eukaryota</taxon>
        <taxon>Amoebozoa</taxon>
        <taxon>Evosea</taxon>
        <taxon>Eumycetozoa</taxon>
        <taxon>Dictyostelia</taxon>
        <taxon>Dictyosteliales</taxon>
        <taxon>Dictyosteliaceae</taxon>
        <taxon>Dictyostelium</taxon>
    </lineage>
</organism>